<proteinExistence type="inferred from homology"/>
<protein>
    <recommendedName>
        <fullName evidence="1">3-demethoxyubiquinol 3-hydroxylase</fullName>
        <shortName evidence="1">DMQ hydroxylase</shortName>
        <ecNumber evidence="1">1.14.99.60</ecNumber>
    </recommendedName>
    <alternativeName>
        <fullName evidence="1">2-nonaprenyl-3-methyl-6-methoxy-1,4-benzoquinol hydroxylase</fullName>
    </alternativeName>
</protein>
<feature type="chain" id="PRO_1000187053" description="3-demethoxyubiquinol 3-hydroxylase">
    <location>
        <begin position="1"/>
        <end position="206"/>
    </location>
</feature>
<feature type="binding site" evidence="1">
    <location>
        <position position="55"/>
    </location>
    <ligand>
        <name>Fe cation</name>
        <dbReference type="ChEBI" id="CHEBI:24875"/>
        <label>1</label>
    </ligand>
</feature>
<feature type="binding site" evidence="1">
    <location>
        <position position="85"/>
    </location>
    <ligand>
        <name>Fe cation</name>
        <dbReference type="ChEBI" id="CHEBI:24875"/>
        <label>1</label>
    </ligand>
</feature>
<feature type="binding site" evidence="1">
    <location>
        <position position="85"/>
    </location>
    <ligand>
        <name>Fe cation</name>
        <dbReference type="ChEBI" id="CHEBI:24875"/>
        <label>2</label>
    </ligand>
</feature>
<feature type="binding site" evidence="1">
    <location>
        <position position="88"/>
    </location>
    <ligand>
        <name>Fe cation</name>
        <dbReference type="ChEBI" id="CHEBI:24875"/>
        <label>1</label>
    </ligand>
</feature>
<feature type="binding site" evidence="1">
    <location>
        <position position="137"/>
    </location>
    <ligand>
        <name>Fe cation</name>
        <dbReference type="ChEBI" id="CHEBI:24875"/>
        <label>2</label>
    </ligand>
</feature>
<feature type="binding site" evidence="1">
    <location>
        <position position="169"/>
    </location>
    <ligand>
        <name>Fe cation</name>
        <dbReference type="ChEBI" id="CHEBI:24875"/>
        <label>1</label>
    </ligand>
</feature>
<feature type="binding site" evidence="1">
    <location>
        <position position="169"/>
    </location>
    <ligand>
        <name>Fe cation</name>
        <dbReference type="ChEBI" id="CHEBI:24875"/>
        <label>2</label>
    </ligand>
</feature>
<feature type="binding site" evidence="1">
    <location>
        <position position="172"/>
    </location>
    <ligand>
        <name>Fe cation</name>
        <dbReference type="ChEBI" id="CHEBI:24875"/>
        <label>2</label>
    </ligand>
</feature>
<gene>
    <name evidence="1" type="primary">coq7</name>
    <name type="ordered locus">LHK_01370</name>
</gene>
<dbReference type="EC" id="1.14.99.60" evidence="1"/>
<dbReference type="EMBL" id="CP001154">
    <property type="protein sequence ID" value="ACO74360.1"/>
    <property type="molecule type" value="Genomic_DNA"/>
</dbReference>
<dbReference type="RefSeq" id="WP_012696846.1">
    <property type="nucleotide sequence ID" value="NC_012559.1"/>
</dbReference>
<dbReference type="SMR" id="C1D7C0"/>
<dbReference type="STRING" id="557598.LHK_01370"/>
<dbReference type="GeneID" id="75109846"/>
<dbReference type="KEGG" id="lhk:LHK_01370"/>
<dbReference type="eggNOG" id="COG2941">
    <property type="taxonomic scope" value="Bacteria"/>
</dbReference>
<dbReference type="HOGENOM" id="CLU_088601_0_0_4"/>
<dbReference type="UniPathway" id="UPA00232"/>
<dbReference type="Proteomes" id="UP000002010">
    <property type="component" value="Chromosome"/>
</dbReference>
<dbReference type="GO" id="GO:0005886">
    <property type="term" value="C:plasma membrane"/>
    <property type="evidence" value="ECO:0007669"/>
    <property type="project" value="UniProtKB-SubCell"/>
</dbReference>
<dbReference type="GO" id="GO:0008682">
    <property type="term" value="F:3-demethoxyubiquinol 3-hydroxylase activity"/>
    <property type="evidence" value="ECO:0007669"/>
    <property type="project" value="UniProtKB-EC"/>
</dbReference>
<dbReference type="GO" id="GO:0046872">
    <property type="term" value="F:metal ion binding"/>
    <property type="evidence" value="ECO:0007669"/>
    <property type="project" value="UniProtKB-KW"/>
</dbReference>
<dbReference type="GO" id="GO:0006744">
    <property type="term" value="P:ubiquinone biosynthetic process"/>
    <property type="evidence" value="ECO:0007669"/>
    <property type="project" value="UniProtKB-UniRule"/>
</dbReference>
<dbReference type="CDD" id="cd01042">
    <property type="entry name" value="DMQH"/>
    <property type="match status" value="1"/>
</dbReference>
<dbReference type="Gene3D" id="1.20.1260.10">
    <property type="match status" value="1"/>
</dbReference>
<dbReference type="HAMAP" id="MF_01658">
    <property type="entry name" value="COQ7"/>
    <property type="match status" value="1"/>
</dbReference>
<dbReference type="InterPro" id="IPR047809">
    <property type="entry name" value="COQ7_proteobact"/>
</dbReference>
<dbReference type="InterPro" id="IPR012347">
    <property type="entry name" value="Ferritin-like"/>
</dbReference>
<dbReference type="InterPro" id="IPR009078">
    <property type="entry name" value="Ferritin-like_SF"/>
</dbReference>
<dbReference type="InterPro" id="IPR011566">
    <property type="entry name" value="Ubq_synth_Coq7"/>
</dbReference>
<dbReference type="NCBIfam" id="NF033656">
    <property type="entry name" value="DMQ_monoox_COQ7"/>
    <property type="match status" value="1"/>
</dbReference>
<dbReference type="PANTHER" id="PTHR11237:SF4">
    <property type="entry name" value="5-DEMETHOXYUBIQUINONE HYDROXYLASE, MITOCHONDRIAL"/>
    <property type="match status" value="1"/>
</dbReference>
<dbReference type="PANTHER" id="PTHR11237">
    <property type="entry name" value="COENZYME Q10 BIOSYNTHESIS PROTEIN 7"/>
    <property type="match status" value="1"/>
</dbReference>
<dbReference type="Pfam" id="PF03232">
    <property type="entry name" value="COQ7"/>
    <property type="match status" value="1"/>
</dbReference>
<dbReference type="SUPFAM" id="SSF47240">
    <property type="entry name" value="Ferritin-like"/>
    <property type="match status" value="1"/>
</dbReference>
<keyword id="KW-1003">Cell membrane</keyword>
<keyword id="KW-0408">Iron</keyword>
<keyword id="KW-0472">Membrane</keyword>
<keyword id="KW-0479">Metal-binding</keyword>
<keyword id="KW-0503">Monooxygenase</keyword>
<keyword id="KW-0560">Oxidoreductase</keyword>
<keyword id="KW-1185">Reference proteome</keyword>
<keyword id="KW-0831">Ubiquinone biosynthesis</keyword>
<organism>
    <name type="scientific">Laribacter hongkongensis (strain HLHK9)</name>
    <dbReference type="NCBI Taxonomy" id="557598"/>
    <lineage>
        <taxon>Bacteria</taxon>
        <taxon>Pseudomonadati</taxon>
        <taxon>Pseudomonadota</taxon>
        <taxon>Betaproteobacteria</taxon>
        <taxon>Neisseriales</taxon>
        <taxon>Aquaspirillaceae</taxon>
        <taxon>Laribacter</taxon>
    </lineage>
</organism>
<sequence length="206" mass="22862">MLDKLIIEFDKGLRTVFAPAQTLRPHPDTGLEEAGLSDLEKRHALGLMRVNHCGEVCAQALYQGQALTARDPATREALKEAAWEETEHLAWTEKRIAELGGRKSLLNPLWYGGSLAMGITAGLLGDRWNLAFLEETEYQVEAHLNEHLATLPEQDAKSRAIVTQMRDDEHRHAETAHALGAAAMPAPVKGLMHLTSQLMKKTSYHI</sequence>
<reference key="1">
    <citation type="journal article" date="2009" name="PLoS Genet.">
        <title>The complete genome and proteome of Laribacter hongkongensis reveal potential mechanisms for adaptations to different temperatures and habitats.</title>
        <authorList>
            <person name="Woo P.C.Y."/>
            <person name="Lau S.K.P."/>
            <person name="Tse H."/>
            <person name="Teng J.L.L."/>
            <person name="Curreem S.O."/>
            <person name="Tsang A.K.L."/>
            <person name="Fan R.Y.Y."/>
            <person name="Wong G.K.M."/>
            <person name="Huang Y."/>
            <person name="Loman N.J."/>
            <person name="Snyder L.A.S."/>
            <person name="Cai J.J."/>
            <person name="Huang J.-D."/>
            <person name="Mak W."/>
            <person name="Pallen M.J."/>
            <person name="Lok S."/>
            <person name="Yuen K.-Y."/>
        </authorList>
    </citation>
    <scope>NUCLEOTIDE SEQUENCE [LARGE SCALE GENOMIC DNA]</scope>
    <source>
        <strain>HLHK9</strain>
    </source>
</reference>
<accession>C1D7C0</accession>
<comment type="function">
    <text evidence="1">Catalyzes the hydroxylation of 2-nonaprenyl-3-methyl-6-methoxy-1,4-benzoquinol during ubiquinone biosynthesis.</text>
</comment>
<comment type="catalytic activity">
    <reaction evidence="1">
        <text>a 5-methoxy-2-methyl-3-(all-trans-polyprenyl)benzene-1,4-diol + AH2 + O2 = a 3-demethylubiquinol + A + H2O</text>
        <dbReference type="Rhea" id="RHEA:50908"/>
        <dbReference type="Rhea" id="RHEA-COMP:10859"/>
        <dbReference type="Rhea" id="RHEA-COMP:10914"/>
        <dbReference type="ChEBI" id="CHEBI:13193"/>
        <dbReference type="ChEBI" id="CHEBI:15377"/>
        <dbReference type="ChEBI" id="CHEBI:15379"/>
        <dbReference type="ChEBI" id="CHEBI:17499"/>
        <dbReference type="ChEBI" id="CHEBI:84167"/>
        <dbReference type="ChEBI" id="CHEBI:84422"/>
        <dbReference type="EC" id="1.14.99.60"/>
    </reaction>
</comment>
<comment type="cofactor">
    <cofactor evidence="1">
        <name>Fe cation</name>
        <dbReference type="ChEBI" id="CHEBI:24875"/>
    </cofactor>
    <text evidence="1">Binds 2 iron ions per subunit.</text>
</comment>
<comment type="pathway">
    <text evidence="1">Cofactor biosynthesis; ubiquinone biosynthesis.</text>
</comment>
<comment type="subcellular location">
    <subcellularLocation>
        <location evidence="1">Cell membrane</location>
        <topology evidence="1">Peripheral membrane protein</topology>
    </subcellularLocation>
</comment>
<comment type="similarity">
    <text evidence="1">Belongs to the COQ7 family.</text>
</comment>
<evidence type="ECO:0000255" key="1">
    <source>
        <dbReference type="HAMAP-Rule" id="MF_01658"/>
    </source>
</evidence>
<name>COQ7_LARHH</name>